<name>ARP8_SCHPO</name>
<feature type="chain" id="PRO_0000089127" description="Probable actin-related protein 8">
    <location>
        <begin position="1"/>
        <end position="662"/>
    </location>
</feature>
<feature type="region of interest" description="Disordered" evidence="2">
    <location>
        <begin position="50"/>
        <end position="92"/>
    </location>
</feature>
<feature type="compositionally biased region" description="Basic and acidic residues" evidence="2">
    <location>
        <begin position="50"/>
        <end position="59"/>
    </location>
</feature>
<feature type="compositionally biased region" description="Basic and acidic residues" evidence="2">
    <location>
        <begin position="67"/>
        <end position="77"/>
    </location>
</feature>
<feature type="compositionally biased region" description="Acidic residues" evidence="2">
    <location>
        <begin position="78"/>
        <end position="89"/>
    </location>
</feature>
<feature type="binding site" evidence="1">
    <location>
        <begin position="339"/>
        <end position="342"/>
    </location>
    <ligand>
        <name>ATP</name>
        <dbReference type="ChEBI" id="CHEBI:30616"/>
    </ligand>
</feature>
<feature type="sequence conflict" description="In Ref. 3; BAA87146." evidence="4" ref="3">
    <original>NSFFS</original>
    <variation>IASFR</variation>
    <location>
        <begin position="419"/>
        <end position="423"/>
    </location>
</feature>
<gene>
    <name type="ORF">SPAC664.02c</name>
</gene>
<accession>Q9US07</accession>
<accession>Q9UU33</accession>
<comment type="function">
    <text evidence="1">Probably involved in transcription regulation via its interaction with the INO80 complex, a chromatin remodeling complex. Exhibits low basal ATPase activity, and unable to polymerize. Strongly prefer nucleosomes and H3-H4 tetramers over H2A-H2B dimers, suggesting it may act as a nucleosome recognition module within the complex (By similarity).</text>
</comment>
<comment type="subunit">
    <text evidence="1">Component of the chromatin remodeling Ino80 complex. Exists as monomers and dimers, but the dimer is most probably the biologically relevant form required for stable interactions with histones that exploits the twofold symmetry of the nucleosome core (By similarity).</text>
</comment>
<comment type="subcellular location">
    <subcellularLocation>
        <location evidence="3">Nucleus</location>
    </subcellularLocation>
</comment>
<comment type="similarity">
    <text evidence="4">Belongs to the actin family.</text>
</comment>
<dbReference type="EMBL" id="CU329670">
    <property type="protein sequence ID" value="CAB65803.2"/>
    <property type="molecule type" value="Genomic_DNA"/>
</dbReference>
<dbReference type="EMBL" id="AB027842">
    <property type="protein sequence ID" value="BAA87146.1"/>
    <property type="molecule type" value="Genomic_DNA"/>
</dbReference>
<dbReference type="PIR" id="T50232">
    <property type="entry name" value="T50232"/>
</dbReference>
<dbReference type="SMR" id="Q9US07"/>
<dbReference type="BioGRID" id="279979">
    <property type="interactions" value="217"/>
</dbReference>
<dbReference type="FunCoup" id="Q9US07">
    <property type="interactions" value="676"/>
</dbReference>
<dbReference type="STRING" id="284812.Q9US07"/>
<dbReference type="iPTMnet" id="Q9US07"/>
<dbReference type="PaxDb" id="4896-SPAC664.02c.1"/>
<dbReference type="EnsemblFungi" id="SPAC664.02c.1">
    <property type="protein sequence ID" value="SPAC664.02c.1:pep"/>
    <property type="gene ID" value="SPAC664.02c"/>
</dbReference>
<dbReference type="KEGG" id="spo:2543563"/>
<dbReference type="PomBase" id="SPAC664.02c"/>
<dbReference type="VEuPathDB" id="FungiDB:SPAC664.02c"/>
<dbReference type="eggNOG" id="KOG0797">
    <property type="taxonomic scope" value="Eukaryota"/>
</dbReference>
<dbReference type="HOGENOM" id="CLU_006974_0_1_1"/>
<dbReference type="InParanoid" id="Q9US07"/>
<dbReference type="OMA" id="AYKCMWA"/>
<dbReference type="PRO" id="PR:Q9US07"/>
<dbReference type="Proteomes" id="UP000002485">
    <property type="component" value="Chromosome I"/>
</dbReference>
<dbReference type="GO" id="GO:0005829">
    <property type="term" value="C:cytosol"/>
    <property type="evidence" value="ECO:0007005"/>
    <property type="project" value="PomBase"/>
</dbReference>
<dbReference type="GO" id="GO:0031011">
    <property type="term" value="C:Ino80 complex"/>
    <property type="evidence" value="ECO:0000314"/>
    <property type="project" value="PomBase"/>
</dbReference>
<dbReference type="GO" id="GO:0005634">
    <property type="term" value="C:nucleus"/>
    <property type="evidence" value="ECO:0007005"/>
    <property type="project" value="PomBase"/>
</dbReference>
<dbReference type="GO" id="GO:0005524">
    <property type="term" value="F:ATP binding"/>
    <property type="evidence" value="ECO:0007669"/>
    <property type="project" value="UniProtKB-KW"/>
</dbReference>
<dbReference type="GO" id="GO:0034080">
    <property type="term" value="P:CENP-A containing chromatin assembly"/>
    <property type="evidence" value="ECO:0000315"/>
    <property type="project" value="PomBase"/>
</dbReference>
<dbReference type="GO" id="GO:0140861">
    <property type="term" value="P:DNA repair-dependent chromatin remodeling"/>
    <property type="evidence" value="ECO:0000269"/>
    <property type="project" value="PomBase"/>
</dbReference>
<dbReference type="GO" id="GO:0006302">
    <property type="term" value="P:double-strand break repair"/>
    <property type="evidence" value="ECO:0000318"/>
    <property type="project" value="GO_Central"/>
</dbReference>
<dbReference type="GO" id="GO:0006355">
    <property type="term" value="P:regulation of DNA-templated transcription"/>
    <property type="evidence" value="ECO:0000318"/>
    <property type="project" value="GO_Central"/>
</dbReference>
<dbReference type="GO" id="GO:0045815">
    <property type="term" value="P:transcription initiation-coupled chromatin remodeling"/>
    <property type="evidence" value="ECO:0000269"/>
    <property type="project" value="PomBase"/>
</dbReference>
<dbReference type="CDD" id="cd10206">
    <property type="entry name" value="ASKHA_NBD_Arp8-like"/>
    <property type="match status" value="1"/>
</dbReference>
<dbReference type="Gene3D" id="3.30.420.40">
    <property type="match status" value="1"/>
</dbReference>
<dbReference type="Gene3D" id="3.30.420.580">
    <property type="match status" value="1"/>
</dbReference>
<dbReference type="Gene3D" id="3.90.640.10">
    <property type="entry name" value="Actin, Chain A, domain 4"/>
    <property type="match status" value="1"/>
</dbReference>
<dbReference type="InterPro" id="IPR004000">
    <property type="entry name" value="Actin"/>
</dbReference>
<dbReference type="InterPro" id="IPR043129">
    <property type="entry name" value="ATPase_NBD"/>
</dbReference>
<dbReference type="PANTHER" id="PTHR11937">
    <property type="entry name" value="ACTIN"/>
    <property type="match status" value="1"/>
</dbReference>
<dbReference type="Pfam" id="PF00022">
    <property type="entry name" value="Actin"/>
    <property type="match status" value="2"/>
</dbReference>
<dbReference type="SMART" id="SM00268">
    <property type="entry name" value="ACTIN"/>
    <property type="match status" value="1"/>
</dbReference>
<dbReference type="SUPFAM" id="SSF53067">
    <property type="entry name" value="Actin-like ATPase domain"/>
    <property type="match status" value="2"/>
</dbReference>
<evidence type="ECO:0000250" key="1"/>
<evidence type="ECO:0000256" key="2">
    <source>
        <dbReference type="SAM" id="MobiDB-lite"/>
    </source>
</evidence>
<evidence type="ECO:0000269" key="3">
    <source>
    </source>
</evidence>
<evidence type="ECO:0000305" key="4"/>
<protein>
    <recommendedName>
        <fullName>Probable actin-related protein 8</fullName>
    </recommendedName>
</protein>
<proteinExistence type="evidence at protein level"/>
<organism>
    <name type="scientific">Schizosaccharomyces pombe (strain 972 / ATCC 24843)</name>
    <name type="common">Fission yeast</name>
    <dbReference type="NCBI Taxonomy" id="284812"/>
    <lineage>
        <taxon>Eukaryota</taxon>
        <taxon>Fungi</taxon>
        <taxon>Dikarya</taxon>
        <taxon>Ascomycota</taxon>
        <taxon>Taphrinomycotina</taxon>
        <taxon>Schizosaccharomycetes</taxon>
        <taxon>Schizosaccharomycetales</taxon>
        <taxon>Schizosaccharomycetaceae</taxon>
        <taxon>Schizosaccharomyces</taxon>
    </lineage>
</organism>
<sequence>MAPKRKQPYTEEGIDFKFTQFQIVPPINQKNFYTEYLKRDDQMYIWRDSAGEKDAKETESESANGDTKQDDSKKSQVEEEEDGIEESELGEEKDNKTIVLHIGSQNLRIGLASNKTPTTVPMVIARKMRAPFAQERCLLKDICHVNEDGNVAFDSEFDSNLKLLDSELKSWLKAQKKRSVPNGTQLVKNYNKISKPETVPPDDDPEKPDWIHFEQDDHVDVICGKEAFLLPLNEYPEYKLFYPIKSGVFNESDYASSQQLLADIYEIFKYSITSLLQIPVSQLSQYSVIFIVPDLYDRVYVEKILDILFFDLHFGKAAIVQESLCTSFGAGMSAACVVDMGAQKTSISCVEEGVVVPNSRIKINYGGDDITLLFMKLLMRSHFPYQDIDLKTPYDWSLANALKIKYCGLSEATYNVQLNSFFSRTPDKGTRKFTFKSLDETMLAPLGFFRPDIFENENKLHDRYTLFPVPVDVYDNQPNNPESLAQTTLLQISTPISNIKANGKDDEEKKEESDLVTPSVKFKPPRVVYCGSLAAPEIKNEKLIYPLDDAINQSIFSACDGNLSDEKAKNLYSSILIVGGAGQFPGFAHLLEERIHSKRANIPTISVIPPPRSMDAQFVAWKGACIYNRIRIVSELWIKNSDWKMLGSRVLQYKTLGYFWTG</sequence>
<keyword id="KW-0067">ATP-binding</keyword>
<keyword id="KW-0547">Nucleotide-binding</keyword>
<keyword id="KW-0539">Nucleus</keyword>
<keyword id="KW-1185">Reference proteome</keyword>
<keyword id="KW-0804">Transcription</keyword>
<keyword id="KW-0805">Transcription regulation</keyword>
<reference key="1">
    <citation type="journal article" date="2002" name="Nature">
        <title>The genome sequence of Schizosaccharomyces pombe.</title>
        <authorList>
            <person name="Wood V."/>
            <person name="Gwilliam R."/>
            <person name="Rajandream M.A."/>
            <person name="Lyne M.H."/>
            <person name="Lyne R."/>
            <person name="Stewart A."/>
            <person name="Sgouros J.G."/>
            <person name="Peat N."/>
            <person name="Hayles J."/>
            <person name="Baker S.G."/>
            <person name="Basham D."/>
            <person name="Bowman S."/>
            <person name="Brooks K."/>
            <person name="Brown D."/>
            <person name="Brown S."/>
            <person name="Chillingworth T."/>
            <person name="Churcher C.M."/>
            <person name="Collins M."/>
            <person name="Connor R."/>
            <person name="Cronin A."/>
            <person name="Davis P."/>
            <person name="Feltwell T."/>
            <person name="Fraser A."/>
            <person name="Gentles S."/>
            <person name="Goble A."/>
            <person name="Hamlin N."/>
            <person name="Harris D.E."/>
            <person name="Hidalgo J."/>
            <person name="Hodgson G."/>
            <person name="Holroyd S."/>
            <person name="Hornsby T."/>
            <person name="Howarth S."/>
            <person name="Huckle E.J."/>
            <person name="Hunt S."/>
            <person name="Jagels K."/>
            <person name="James K.D."/>
            <person name="Jones L."/>
            <person name="Jones M."/>
            <person name="Leather S."/>
            <person name="McDonald S."/>
            <person name="McLean J."/>
            <person name="Mooney P."/>
            <person name="Moule S."/>
            <person name="Mungall K.L."/>
            <person name="Murphy L.D."/>
            <person name="Niblett D."/>
            <person name="Odell C."/>
            <person name="Oliver K."/>
            <person name="O'Neil S."/>
            <person name="Pearson D."/>
            <person name="Quail M.A."/>
            <person name="Rabbinowitsch E."/>
            <person name="Rutherford K.M."/>
            <person name="Rutter S."/>
            <person name="Saunders D."/>
            <person name="Seeger K."/>
            <person name="Sharp S."/>
            <person name="Skelton J."/>
            <person name="Simmonds M.N."/>
            <person name="Squares R."/>
            <person name="Squares S."/>
            <person name="Stevens K."/>
            <person name="Taylor K."/>
            <person name="Taylor R.G."/>
            <person name="Tivey A."/>
            <person name="Walsh S.V."/>
            <person name="Warren T."/>
            <person name="Whitehead S."/>
            <person name="Woodward J.R."/>
            <person name="Volckaert G."/>
            <person name="Aert R."/>
            <person name="Robben J."/>
            <person name="Grymonprez B."/>
            <person name="Weltjens I."/>
            <person name="Vanstreels E."/>
            <person name="Rieger M."/>
            <person name="Schaefer M."/>
            <person name="Mueller-Auer S."/>
            <person name="Gabel C."/>
            <person name="Fuchs M."/>
            <person name="Duesterhoeft A."/>
            <person name="Fritzc C."/>
            <person name="Holzer E."/>
            <person name="Moestl D."/>
            <person name="Hilbert H."/>
            <person name="Borzym K."/>
            <person name="Langer I."/>
            <person name="Beck A."/>
            <person name="Lehrach H."/>
            <person name="Reinhardt R."/>
            <person name="Pohl T.M."/>
            <person name="Eger P."/>
            <person name="Zimmermann W."/>
            <person name="Wedler H."/>
            <person name="Wambutt R."/>
            <person name="Purnelle B."/>
            <person name="Goffeau A."/>
            <person name="Cadieu E."/>
            <person name="Dreano S."/>
            <person name="Gloux S."/>
            <person name="Lelaure V."/>
            <person name="Mottier S."/>
            <person name="Galibert F."/>
            <person name="Aves S.J."/>
            <person name="Xiang Z."/>
            <person name="Hunt C."/>
            <person name="Moore K."/>
            <person name="Hurst S.M."/>
            <person name="Lucas M."/>
            <person name="Rochet M."/>
            <person name="Gaillardin C."/>
            <person name="Tallada V.A."/>
            <person name="Garzon A."/>
            <person name="Thode G."/>
            <person name="Daga R.R."/>
            <person name="Cruzado L."/>
            <person name="Jimenez J."/>
            <person name="Sanchez M."/>
            <person name="del Rey F."/>
            <person name="Benito J."/>
            <person name="Dominguez A."/>
            <person name="Revuelta J.L."/>
            <person name="Moreno S."/>
            <person name="Armstrong J."/>
            <person name="Forsburg S.L."/>
            <person name="Cerutti L."/>
            <person name="Lowe T."/>
            <person name="McCombie W.R."/>
            <person name="Paulsen I."/>
            <person name="Potashkin J."/>
            <person name="Shpakovski G.V."/>
            <person name="Ussery D."/>
            <person name="Barrell B.G."/>
            <person name="Nurse P."/>
        </authorList>
    </citation>
    <scope>NUCLEOTIDE SEQUENCE [LARGE SCALE GENOMIC DNA]</scope>
    <source>
        <strain>972 / ATCC 24843</strain>
    </source>
</reference>
<reference key="2">
    <citation type="journal article" date="2011" name="Science">
        <title>Comparative functional genomics of the fission yeasts.</title>
        <authorList>
            <person name="Rhind N."/>
            <person name="Chen Z."/>
            <person name="Yassour M."/>
            <person name="Thompson D.A."/>
            <person name="Haas B.J."/>
            <person name="Habib N."/>
            <person name="Wapinski I."/>
            <person name="Roy S."/>
            <person name="Lin M.F."/>
            <person name="Heiman D.I."/>
            <person name="Young S.K."/>
            <person name="Furuya K."/>
            <person name="Guo Y."/>
            <person name="Pidoux A."/>
            <person name="Chen H.M."/>
            <person name="Robbertse B."/>
            <person name="Goldberg J.M."/>
            <person name="Aoki K."/>
            <person name="Bayne E.H."/>
            <person name="Berlin A.M."/>
            <person name="Desjardins C.A."/>
            <person name="Dobbs E."/>
            <person name="Dukaj L."/>
            <person name="Fan L."/>
            <person name="FitzGerald M.G."/>
            <person name="French C."/>
            <person name="Gujja S."/>
            <person name="Hansen K."/>
            <person name="Keifenheim D."/>
            <person name="Levin J.Z."/>
            <person name="Mosher R.A."/>
            <person name="Mueller C.A."/>
            <person name="Pfiffner J."/>
            <person name="Priest M."/>
            <person name="Russ C."/>
            <person name="Smialowska A."/>
            <person name="Swoboda P."/>
            <person name="Sykes S.M."/>
            <person name="Vaughn M."/>
            <person name="Vengrova S."/>
            <person name="Yoder R."/>
            <person name="Zeng Q."/>
            <person name="Allshire R."/>
            <person name="Baulcombe D."/>
            <person name="Birren B.W."/>
            <person name="Brown W."/>
            <person name="Ekwall K."/>
            <person name="Kellis M."/>
            <person name="Leatherwood J."/>
            <person name="Levin H."/>
            <person name="Margalit H."/>
            <person name="Martienssen R."/>
            <person name="Nieduszynski C.A."/>
            <person name="Spatafora J.W."/>
            <person name="Friedman N."/>
            <person name="Dalgaard J.Z."/>
            <person name="Baumann P."/>
            <person name="Niki H."/>
            <person name="Regev A."/>
            <person name="Nusbaum C."/>
        </authorList>
    </citation>
    <scope>REVISION OF GENE MODEL</scope>
</reference>
<reference key="3">
    <citation type="journal article" date="2000" name="Genes Cells">
        <title>Large-scale screening of intracellular protein localization in living fission yeast cells by the use of a GFP-fusion genomic DNA library.</title>
        <authorList>
            <person name="Ding D.-Q."/>
            <person name="Tomita Y."/>
            <person name="Yamamoto A."/>
            <person name="Chikashige Y."/>
            <person name="Haraguchi T."/>
            <person name="Hiraoka Y."/>
        </authorList>
    </citation>
    <scope>NUCLEOTIDE SEQUENCE [LARGE SCALE GENOMIC DNA] OF 419-632</scope>
    <scope>SUBCELLULAR LOCATION</scope>
    <source>
        <strain>ATCC 38364 / 968</strain>
    </source>
</reference>
<reference key="4">
    <citation type="journal article" date="2008" name="Genome Biol.">
        <title>Chromatin Central: towards the comparative proteome by accurate mapping of the yeast proteomic environment.</title>
        <authorList>
            <person name="Shevchenko A."/>
            <person name="Roguev A."/>
            <person name="Schaft D."/>
            <person name="Buchanan L."/>
            <person name="Habermann B."/>
            <person name="Sakalar C."/>
            <person name="Thomas H."/>
            <person name="Krogan N.J."/>
            <person name="Shevchenko A."/>
            <person name="Stewart A.F."/>
        </authorList>
    </citation>
    <scope>IDENTIFICATION IN THE INO80 COMPLEX</scope>
    <scope>IDENTIFICATION BY MASS SPECTROMETRY</scope>
</reference>